<name>LA_HUMAN</name>
<evidence type="ECO:0000250" key="1">
    <source>
        <dbReference type="UniProtKB" id="P32067"/>
    </source>
</evidence>
<evidence type="ECO:0000255" key="2">
    <source>
        <dbReference type="PROSITE-ProRule" id="PRU00176"/>
    </source>
</evidence>
<evidence type="ECO:0000255" key="3">
    <source>
        <dbReference type="PROSITE-ProRule" id="PRU00332"/>
    </source>
</evidence>
<evidence type="ECO:0000255" key="4">
    <source>
        <dbReference type="PROSITE-ProRule" id="PRU01288"/>
    </source>
</evidence>
<evidence type="ECO:0000256" key="5">
    <source>
        <dbReference type="SAM" id="MobiDB-lite"/>
    </source>
</evidence>
<evidence type="ECO:0000269" key="6">
    <source>
    </source>
</evidence>
<evidence type="ECO:0000269" key="7">
    <source>
    </source>
</evidence>
<evidence type="ECO:0000269" key="8">
    <source>
    </source>
</evidence>
<evidence type="ECO:0000269" key="9">
    <source>
    </source>
</evidence>
<evidence type="ECO:0000269" key="10">
    <source>
    </source>
</evidence>
<evidence type="ECO:0000269" key="11">
    <source>
    </source>
</evidence>
<evidence type="ECO:0000305" key="12"/>
<evidence type="ECO:0007744" key="13">
    <source>
    </source>
</evidence>
<evidence type="ECO:0007744" key="14">
    <source>
    </source>
</evidence>
<evidence type="ECO:0007744" key="15">
    <source>
    </source>
</evidence>
<evidence type="ECO:0007744" key="16">
    <source>
    </source>
</evidence>
<evidence type="ECO:0007744" key="17">
    <source>
    </source>
</evidence>
<evidence type="ECO:0007744" key="18">
    <source>
    </source>
</evidence>
<evidence type="ECO:0007744" key="19">
    <source>
    </source>
</evidence>
<evidence type="ECO:0007744" key="20">
    <source>
    </source>
</evidence>
<evidence type="ECO:0007744" key="21">
    <source>
    </source>
</evidence>
<evidence type="ECO:0007744" key="22">
    <source>
    </source>
</evidence>
<evidence type="ECO:0007829" key="23">
    <source>
        <dbReference type="PDB" id="1OWX"/>
    </source>
</evidence>
<evidence type="ECO:0007829" key="24">
    <source>
        <dbReference type="PDB" id="1YTY"/>
    </source>
</evidence>
<evidence type="ECO:0007829" key="25">
    <source>
        <dbReference type="PDB" id="2VOD"/>
    </source>
</evidence>
<evidence type="ECO:0007829" key="26">
    <source>
        <dbReference type="PDB" id="2VON"/>
    </source>
</evidence>
<evidence type="ECO:0007829" key="27">
    <source>
        <dbReference type="PDB" id="2VOO"/>
    </source>
</evidence>
<evidence type="ECO:0007829" key="28">
    <source>
        <dbReference type="PDB" id="2VOP"/>
    </source>
</evidence>
<accession>P05455</accession>
<accession>Q15367</accession>
<accession>Q53XJ4</accession>
<reference key="1">
    <citation type="journal article" date="1989" name="Nucleic Acids Res.">
        <title>Ribonucleoprotein SS-B/La belongs to a protein family with consensus sequences for RNA-binding.</title>
        <authorList>
            <person name="Chan E.K.L."/>
            <person name="Sullivan K.F."/>
            <person name="Tan E.M."/>
        </authorList>
    </citation>
    <scope>NUCLEOTIDE SEQUENCE [MRNA]</scope>
</reference>
<reference key="2">
    <citation type="journal article" date="1988" name="J. Biol. Chem.">
        <title>Genomic structure and amino acid sequence domains of the human La autoantigen.</title>
        <authorList>
            <person name="Chambers J.C."/>
            <person name="Kenan D."/>
            <person name="Martin B.J."/>
            <person name="Keene J.D."/>
        </authorList>
    </citation>
    <scope>NUCLEOTIDE SEQUENCE [GENOMIC DNA / MRNA]</scope>
    <scope>ROLE IN LUPUS ERYTHEMATOSUS</scope>
</reference>
<reference key="3">
    <citation type="submission" date="2003-08" db="EMBL/GenBank/DDBJ databases">
        <title>Cloning of human full-length CDSs in BD Creator(TM) system donor vector.</title>
        <authorList>
            <person name="Kalnine N."/>
            <person name="Chen X."/>
            <person name="Rolfs A."/>
            <person name="Halleck A."/>
            <person name="Hines L."/>
            <person name="Eisenstein S."/>
            <person name="Koundinya M."/>
            <person name="Raphael J."/>
            <person name="Moreira D."/>
            <person name="Kelley T."/>
            <person name="LaBaer J."/>
            <person name="Lin Y."/>
            <person name="Phelan M."/>
            <person name="Farmer A."/>
        </authorList>
    </citation>
    <scope>NUCLEOTIDE SEQUENCE [LARGE SCALE MRNA]</scope>
</reference>
<reference key="4">
    <citation type="journal article" date="2008" name="Nat. Methods">
        <title>Human protein factory for converting the transcriptome into an in vitro-expressed proteome.</title>
        <authorList>
            <person name="Goshima N."/>
            <person name="Kawamura Y."/>
            <person name="Fukumoto A."/>
            <person name="Miura A."/>
            <person name="Honma R."/>
            <person name="Satoh R."/>
            <person name="Wakamatsu A."/>
            <person name="Yamamoto J."/>
            <person name="Kimura K."/>
            <person name="Nishikawa T."/>
            <person name="Andoh T."/>
            <person name="Iida Y."/>
            <person name="Ishikawa K."/>
            <person name="Ito E."/>
            <person name="Kagawa N."/>
            <person name="Kaminaga C."/>
            <person name="Kanehori K."/>
            <person name="Kawakami B."/>
            <person name="Kenmochi K."/>
            <person name="Kimura R."/>
            <person name="Kobayashi M."/>
            <person name="Kuroita T."/>
            <person name="Kuwayama H."/>
            <person name="Maruyama Y."/>
            <person name="Matsuo K."/>
            <person name="Minami K."/>
            <person name="Mitsubori M."/>
            <person name="Mori M."/>
            <person name="Morishita R."/>
            <person name="Murase A."/>
            <person name="Nishikawa A."/>
            <person name="Nishikawa S."/>
            <person name="Okamoto T."/>
            <person name="Sakagami N."/>
            <person name="Sakamoto Y."/>
            <person name="Sasaki Y."/>
            <person name="Seki T."/>
            <person name="Sono S."/>
            <person name="Sugiyama A."/>
            <person name="Sumiya T."/>
            <person name="Takayama T."/>
            <person name="Takayama Y."/>
            <person name="Takeda H."/>
            <person name="Togashi T."/>
            <person name="Yahata K."/>
            <person name="Yamada H."/>
            <person name="Yanagisawa Y."/>
            <person name="Endo Y."/>
            <person name="Imamoto F."/>
            <person name="Kisu Y."/>
            <person name="Tanaka S."/>
            <person name="Isogai T."/>
            <person name="Imai J."/>
            <person name="Watanabe S."/>
            <person name="Nomura N."/>
        </authorList>
    </citation>
    <scope>NUCLEOTIDE SEQUENCE [LARGE SCALE MRNA]</scope>
</reference>
<reference key="5">
    <citation type="journal article" date="2005" name="Nature">
        <title>Generation and annotation of the DNA sequences of human chromosomes 2 and 4.</title>
        <authorList>
            <person name="Hillier L.W."/>
            <person name="Graves T.A."/>
            <person name="Fulton R.S."/>
            <person name="Fulton L.A."/>
            <person name="Pepin K.H."/>
            <person name="Minx P."/>
            <person name="Wagner-McPherson C."/>
            <person name="Layman D."/>
            <person name="Wylie K."/>
            <person name="Sekhon M."/>
            <person name="Becker M.C."/>
            <person name="Fewell G.A."/>
            <person name="Delehaunty K.D."/>
            <person name="Miner T.L."/>
            <person name="Nash W.E."/>
            <person name="Kremitzki C."/>
            <person name="Oddy L."/>
            <person name="Du H."/>
            <person name="Sun H."/>
            <person name="Bradshaw-Cordum H."/>
            <person name="Ali J."/>
            <person name="Carter J."/>
            <person name="Cordes M."/>
            <person name="Harris A."/>
            <person name="Isak A."/>
            <person name="van Brunt A."/>
            <person name="Nguyen C."/>
            <person name="Du F."/>
            <person name="Courtney L."/>
            <person name="Kalicki J."/>
            <person name="Ozersky P."/>
            <person name="Abbott S."/>
            <person name="Armstrong J."/>
            <person name="Belter E.A."/>
            <person name="Caruso L."/>
            <person name="Cedroni M."/>
            <person name="Cotton M."/>
            <person name="Davidson T."/>
            <person name="Desai A."/>
            <person name="Elliott G."/>
            <person name="Erb T."/>
            <person name="Fronick C."/>
            <person name="Gaige T."/>
            <person name="Haakenson W."/>
            <person name="Haglund K."/>
            <person name="Holmes A."/>
            <person name="Harkins R."/>
            <person name="Kim K."/>
            <person name="Kruchowski S.S."/>
            <person name="Strong C.M."/>
            <person name="Grewal N."/>
            <person name="Goyea E."/>
            <person name="Hou S."/>
            <person name="Levy A."/>
            <person name="Martinka S."/>
            <person name="Mead K."/>
            <person name="McLellan M.D."/>
            <person name="Meyer R."/>
            <person name="Randall-Maher J."/>
            <person name="Tomlinson C."/>
            <person name="Dauphin-Kohlberg S."/>
            <person name="Kozlowicz-Reilly A."/>
            <person name="Shah N."/>
            <person name="Swearengen-Shahid S."/>
            <person name="Snider J."/>
            <person name="Strong J.T."/>
            <person name="Thompson J."/>
            <person name="Yoakum M."/>
            <person name="Leonard S."/>
            <person name="Pearman C."/>
            <person name="Trani L."/>
            <person name="Radionenko M."/>
            <person name="Waligorski J.E."/>
            <person name="Wang C."/>
            <person name="Rock S.M."/>
            <person name="Tin-Wollam A.-M."/>
            <person name="Maupin R."/>
            <person name="Latreille P."/>
            <person name="Wendl M.C."/>
            <person name="Yang S.-P."/>
            <person name="Pohl C."/>
            <person name="Wallis J.W."/>
            <person name="Spieth J."/>
            <person name="Bieri T.A."/>
            <person name="Berkowicz N."/>
            <person name="Nelson J.O."/>
            <person name="Osborne J."/>
            <person name="Ding L."/>
            <person name="Meyer R."/>
            <person name="Sabo A."/>
            <person name="Shotland Y."/>
            <person name="Sinha P."/>
            <person name="Wohldmann P.E."/>
            <person name="Cook L.L."/>
            <person name="Hickenbotham M.T."/>
            <person name="Eldred J."/>
            <person name="Williams D."/>
            <person name="Jones T.A."/>
            <person name="She X."/>
            <person name="Ciccarelli F.D."/>
            <person name="Izaurralde E."/>
            <person name="Taylor J."/>
            <person name="Schmutz J."/>
            <person name="Myers R.M."/>
            <person name="Cox D.R."/>
            <person name="Huang X."/>
            <person name="McPherson J.D."/>
            <person name="Mardis E.R."/>
            <person name="Clifton S.W."/>
            <person name="Warren W.C."/>
            <person name="Chinwalla A.T."/>
            <person name="Eddy S.R."/>
            <person name="Marra M.A."/>
            <person name="Ovcharenko I."/>
            <person name="Furey T.S."/>
            <person name="Miller W."/>
            <person name="Eichler E.E."/>
            <person name="Bork P."/>
            <person name="Suyama M."/>
            <person name="Torrents D."/>
            <person name="Waterston R.H."/>
            <person name="Wilson R.K."/>
        </authorList>
    </citation>
    <scope>NUCLEOTIDE SEQUENCE [LARGE SCALE GENOMIC DNA]</scope>
</reference>
<reference key="6">
    <citation type="submission" date="2005-09" db="EMBL/GenBank/DDBJ databases">
        <authorList>
            <person name="Mural R.J."/>
            <person name="Istrail S."/>
            <person name="Sutton G.G."/>
            <person name="Florea L."/>
            <person name="Halpern A.L."/>
            <person name="Mobarry C.M."/>
            <person name="Lippert R."/>
            <person name="Walenz B."/>
            <person name="Shatkay H."/>
            <person name="Dew I."/>
            <person name="Miller J.R."/>
            <person name="Flanigan M.J."/>
            <person name="Edwards N.J."/>
            <person name="Bolanos R."/>
            <person name="Fasulo D."/>
            <person name="Halldorsson B.V."/>
            <person name="Hannenhalli S."/>
            <person name="Turner R."/>
            <person name="Yooseph S."/>
            <person name="Lu F."/>
            <person name="Nusskern D.R."/>
            <person name="Shue B.C."/>
            <person name="Zheng X.H."/>
            <person name="Zhong F."/>
            <person name="Delcher A.L."/>
            <person name="Huson D.H."/>
            <person name="Kravitz S.A."/>
            <person name="Mouchard L."/>
            <person name="Reinert K."/>
            <person name="Remington K.A."/>
            <person name="Clark A.G."/>
            <person name="Waterman M.S."/>
            <person name="Eichler E.E."/>
            <person name="Adams M.D."/>
            <person name="Hunkapiller M.W."/>
            <person name="Myers E.W."/>
            <person name="Venter J.C."/>
        </authorList>
    </citation>
    <scope>NUCLEOTIDE SEQUENCE [LARGE SCALE GENOMIC DNA]</scope>
</reference>
<reference key="7">
    <citation type="journal article" date="2004" name="Genome Res.">
        <title>The status, quality, and expansion of the NIH full-length cDNA project: the Mammalian Gene Collection (MGC).</title>
        <authorList>
            <consortium name="The MGC Project Team"/>
        </authorList>
    </citation>
    <scope>NUCLEOTIDE SEQUENCE [LARGE SCALE MRNA]</scope>
    <source>
        <tissue>Placenta</tissue>
        <tissue>Skeletal muscle</tissue>
    </source>
</reference>
<reference key="8">
    <citation type="journal article" date="1988" name="J. Immunol.">
        <title>Characteristics and epitope mapping of a cloned human autoantigen La.</title>
        <authorList>
            <person name="Sturgess A.D."/>
            <person name="Peterson M.G."/>
            <person name="McNeilage L.J."/>
            <person name="Whittingham S."/>
            <person name="Coppel R.S."/>
        </authorList>
    </citation>
    <scope>NUCLEOTIDE SEQUENCE [MRNA] OF 54-408</scope>
</reference>
<reference key="9">
    <citation type="journal article" date="1985" name="Proc. Natl. Acad. Sci. U.S.A.">
        <title>Isolation and analysis of cDNA clones expressing human lupus La antigen.</title>
        <authorList>
            <person name="Chambers J.C."/>
            <person name="Keene J.D."/>
        </authorList>
    </citation>
    <scope>NUCLEOTIDE SEQUENCE [MRNA] OF 54-97</scope>
</reference>
<reference key="10">
    <citation type="journal article" date="1989" name="EMBO J.">
        <title>Function of the mammalian La protein: evidence for its action in transcription termination by RNA polymerase III.</title>
        <authorList>
            <person name="Gottlieb E."/>
            <person name="Steitz J.A."/>
        </authorList>
    </citation>
    <scope>FUNCTION</scope>
</reference>
<reference key="11">
    <citation type="journal article" date="1997" name="Cell">
        <title>Phosphorylation of the human La antigen on serine 366 can regulate recycling of RNA polymerase III transcription complexes.</title>
        <authorList>
            <person name="Fan H."/>
            <person name="Sakulich A.L."/>
            <person name="Goodier J.L."/>
            <person name="Zhang X."/>
            <person name="Qin J."/>
            <person name="Maraie R.J."/>
        </authorList>
    </citation>
    <scope>PHOSPHORYLATION AT SER-366</scope>
</reference>
<reference key="12">
    <citation type="journal article" date="2002" name="RNA">
        <title>The human La (SS-B) autoantigen interacts with DDX15/hPrp43, a putative DEAH-box RNA helicase.</title>
        <authorList>
            <person name="Fouraux M.A."/>
            <person name="Kolkman M.J.M."/>
            <person name="Van der Heijden A."/>
            <person name="De Jong A.S."/>
            <person name="Van Venrooij W.J."/>
            <person name="Pruijn G.J.M."/>
        </authorList>
    </citation>
    <scope>INTERACTION WITH DDX15</scope>
</reference>
<reference key="13">
    <citation type="journal article" date="2002" name="Nucleic Acids Res.">
        <title>La autoantigen is required for the internal ribosome entry site-mediated translation of Coxsackievirus B3 RNA.</title>
        <authorList>
            <person name="Ray P.S."/>
            <person name="Das S."/>
        </authorList>
    </citation>
    <scope>FUNCTION</scope>
</reference>
<reference key="14">
    <citation type="journal article" date="2004" name="Mol. Biol. Cell">
        <title>Rabip4' is an effector of rab5 and rab4 and regulates transport through early endosomes.</title>
        <authorList>
            <person name="Fouraux M.A."/>
            <person name="Deneka M."/>
            <person name="Ivan V."/>
            <person name="van der Heijden A."/>
            <person name="Raymackers J."/>
            <person name="van Suylekom D."/>
            <person name="van Venrooij W.J."/>
            <person name="van der Sluijs P."/>
            <person name="Pruijn G.J.M."/>
        </authorList>
    </citation>
    <scope>INTERACTION WITH RUFY1</scope>
</reference>
<reference key="15">
    <citation type="journal article" date="2006" name="Cell">
        <title>Global, in vivo, and site-specific phosphorylation dynamics in signaling networks.</title>
        <authorList>
            <person name="Olsen J.V."/>
            <person name="Blagoev B."/>
            <person name="Gnad F."/>
            <person name="Macek B."/>
            <person name="Kumar C."/>
            <person name="Mortensen P."/>
            <person name="Mann M."/>
        </authorList>
    </citation>
    <scope>PHOSPHORYLATION [LARGE SCALE ANALYSIS] AT SER-366</scope>
    <scope>IDENTIFICATION BY MASS SPECTROMETRY [LARGE SCALE ANALYSIS]</scope>
    <source>
        <tissue>Cervix carcinoma</tissue>
    </source>
</reference>
<reference key="16">
    <citation type="journal article" date="2008" name="Mol. Cell">
        <title>Kinase-selective enrichment enables quantitative phosphoproteomics of the kinome across the cell cycle.</title>
        <authorList>
            <person name="Daub H."/>
            <person name="Olsen J.V."/>
            <person name="Bairlein M."/>
            <person name="Gnad F."/>
            <person name="Oppermann F.S."/>
            <person name="Korner R."/>
            <person name="Greff Z."/>
            <person name="Keri G."/>
            <person name="Stemmann O."/>
            <person name="Mann M."/>
        </authorList>
    </citation>
    <scope>PHOSPHORYLATION [LARGE SCALE ANALYSIS] AT SER-366</scope>
    <scope>IDENTIFICATION BY MASS SPECTROMETRY [LARGE SCALE ANALYSIS]</scope>
    <source>
        <tissue>Cervix carcinoma</tissue>
    </source>
</reference>
<reference key="17">
    <citation type="journal article" date="2008" name="Proc. Natl. Acad. Sci. U.S.A.">
        <title>A quantitative atlas of mitotic phosphorylation.</title>
        <authorList>
            <person name="Dephoure N."/>
            <person name="Zhou C."/>
            <person name="Villen J."/>
            <person name="Beausoleil S.A."/>
            <person name="Bakalarski C.E."/>
            <person name="Elledge S.J."/>
            <person name="Gygi S.P."/>
        </authorList>
    </citation>
    <scope>PHOSPHORYLATION [LARGE SCALE ANALYSIS] AT SER-366</scope>
    <scope>IDENTIFICATION BY MASS SPECTROMETRY [LARGE SCALE ANALYSIS]</scope>
    <source>
        <tissue>Cervix carcinoma</tissue>
    </source>
</reference>
<reference key="18">
    <citation type="journal article" date="2008" name="Proteomics">
        <title>Large-scale phosphoproteome analysis of human liver tissue by enrichment and fractionation of phosphopeptides with strong anion exchange chromatography.</title>
        <authorList>
            <person name="Han G."/>
            <person name="Ye M."/>
            <person name="Zhou H."/>
            <person name="Jiang X."/>
            <person name="Feng S."/>
            <person name="Jiang X."/>
            <person name="Tian R."/>
            <person name="Wan D."/>
            <person name="Zou H."/>
            <person name="Gu J."/>
        </authorList>
    </citation>
    <scope>PHOSPHORYLATION [LARGE SCALE ANALYSIS] AT SER-366</scope>
    <scope>IDENTIFICATION BY MASS SPECTROMETRY [LARGE SCALE ANALYSIS]</scope>
    <source>
        <tissue>Liver</tissue>
    </source>
</reference>
<reference key="19">
    <citation type="journal article" date="2009" name="Anal. Chem.">
        <title>Lys-N and trypsin cover complementary parts of the phosphoproteome in a refined SCX-based approach.</title>
        <authorList>
            <person name="Gauci S."/>
            <person name="Helbig A.O."/>
            <person name="Slijper M."/>
            <person name="Krijgsveld J."/>
            <person name="Heck A.J."/>
            <person name="Mohammed S."/>
        </authorList>
    </citation>
    <scope>IDENTIFICATION BY MASS SPECTROMETRY [LARGE SCALE ANALYSIS]</scope>
</reference>
<reference key="20">
    <citation type="journal article" date="2009" name="Sci. Signal.">
        <title>Quantitative phosphoproteomic analysis of T cell receptor signaling reveals system-wide modulation of protein-protein interactions.</title>
        <authorList>
            <person name="Mayya V."/>
            <person name="Lundgren D.H."/>
            <person name="Hwang S.-I."/>
            <person name="Rezaul K."/>
            <person name="Wu L."/>
            <person name="Eng J.K."/>
            <person name="Rodionov V."/>
            <person name="Han D.K."/>
        </authorList>
    </citation>
    <scope>PHOSPHORYLATION [LARGE SCALE ANALYSIS] AT SER-366</scope>
    <scope>IDENTIFICATION BY MASS SPECTROMETRY [LARGE SCALE ANALYSIS]</scope>
    <source>
        <tissue>Leukemic T-cell</tissue>
    </source>
</reference>
<reference key="21">
    <citation type="journal article" date="2009" name="Science">
        <title>Lysine acetylation targets protein complexes and co-regulates major cellular functions.</title>
        <authorList>
            <person name="Choudhary C."/>
            <person name="Kumar C."/>
            <person name="Gnad F."/>
            <person name="Nielsen M.L."/>
            <person name="Rehman M."/>
            <person name="Walther T.C."/>
            <person name="Olsen J.V."/>
            <person name="Mann M."/>
        </authorList>
    </citation>
    <scope>ACETYLATION [LARGE SCALE ANALYSIS] AT LYS-116; LYS-128; LYS-328 AND LYS-360</scope>
    <scope>IDENTIFICATION BY MASS SPECTROMETRY [LARGE SCALE ANALYSIS]</scope>
</reference>
<reference key="22">
    <citation type="journal article" date="2010" name="Sci. Signal.">
        <title>Quantitative phosphoproteomics reveals widespread full phosphorylation site occupancy during mitosis.</title>
        <authorList>
            <person name="Olsen J.V."/>
            <person name="Vermeulen M."/>
            <person name="Santamaria A."/>
            <person name="Kumar C."/>
            <person name="Miller M.L."/>
            <person name="Jensen L.J."/>
            <person name="Gnad F."/>
            <person name="Cox J."/>
            <person name="Jensen T.S."/>
            <person name="Nigg E.A."/>
            <person name="Brunak S."/>
            <person name="Mann M."/>
        </authorList>
    </citation>
    <scope>PHOSPHORYLATION [LARGE SCALE ANALYSIS] AT SER-366</scope>
    <scope>IDENTIFICATION BY MASS SPECTROMETRY [LARGE SCALE ANALYSIS]</scope>
    <source>
        <tissue>Cervix carcinoma</tissue>
    </source>
</reference>
<reference key="23">
    <citation type="journal article" date="2011" name="BMC Syst. Biol.">
        <title>Initial characterization of the human central proteome.</title>
        <authorList>
            <person name="Burkard T.R."/>
            <person name="Planyavsky M."/>
            <person name="Kaupe I."/>
            <person name="Breitwieser F.P."/>
            <person name="Buerckstuemmer T."/>
            <person name="Bennett K.L."/>
            <person name="Superti-Furga G."/>
            <person name="Colinge J."/>
        </authorList>
    </citation>
    <scope>IDENTIFICATION BY MASS SPECTROMETRY [LARGE SCALE ANALYSIS]</scope>
</reference>
<reference key="24">
    <citation type="journal article" date="2011" name="Sci. Signal.">
        <title>System-wide temporal characterization of the proteome and phosphoproteome of human embryonic stem cell differentiation.</title>
        <authorList>
            <person name="Rigbolt K.T."/>
            <person name="Prokhorova T.A."/>
            <person name="Akimov V."/>
            <person name="Henningsen J."/>
            <person name="Johansen P.T."/>
            <person name="Kratchmarova I."/>
            <person name="Kassem M."/>
            <person name="Mann M."/>
            <person name="Olsen J.V."/>
            <person name="Blagoev B."/>
        </authorList>
    </citation>
    <scope>PHOSPHORYLATION [LARGE SCALE ANALYSIS] AT SER-366</scope>
    <scope>IDENTIFICATION BY MASS SPECTROMETRY [LARGE SCALE ANALYSIS]</scope>
</reference>
<reference key="25">
    <citation type="journal article" date="2013" name="J. Proteome Res.">
        <title>Toward a comprehensive characterization of a human cancer cell phosphoproteome.</title>
        <authorList>
            <person name="Zhou H."/>
            <person name="Di Palma S."/>
            <person name="Preisinger C."/>
            <person name="Peng M."/>
            <person name="Polat A.N."/>
            <person name="Heck A.J."/>
            <person name="Mohammed S."/>
        </authorList>
    </citation>
    <scope>PHOSPHORYLATION [LARGE SCALE ANALYSIS] AT SER-92; SER-94; THR-120; SER-225 AND SER-366</scope>
    <scope>IDENTIFICATION BY MASS SPECTROMETRY [LARGE SCALE ANALYSIS]</scope>
    <source>
        <tissue>Cervix carcinoma</tissue>
        <tissue>Erythroleukemia</tissue>
    </source>
</reference>
<reference key="26">
    <citation type="journal article" date="2014" name="J. Proteomics">
        <title>An enzyme assisted RP-RPLC approach for in-depth analysis of human liver phosphoproteome.</title>
        <authorList>
            <person name="Bian Y."/>
            <person name="Song C."/>
            <person name="Cheng K."/>
            <person name="Dong M."/>
            <person name="Wang F."/>
            <person name="Huang J."/>
            <person name="Sun D."/>
            <person name="Wang L."/>
            <person name="Ye M."/>
            <person name="Zou H."/>
        </authorList>
    </citation>
    <scope>PHOSPHORYLATION [LARGE SCALE ANALYSIS] AT THR-362</scope>
    <scope>IDENTIFICATION BY MASS SPECTROMETRY [LARGE SCALE ANALYSIS]</scope>
    <source>
        <tissue>Liver</tissue>
    </source>
</reference>
<reference key="27">
    <citation type="journal article" date="2003" name="Structure">
        <title>Structure of the C-terminal domain of human La protein reveals a novel RNA recognition motif coupled to a helical nuclear retention element.</title>
        <authorList>
            <person name="Jacks A."/>
            <person name="Babon J."/>
            <person name="Kelly G."/>
            <person name="Manolaridis I."/>
            <person name="Cary P.D."/>
            <person name="Curry S."/>
            <person name="Conte M.R."/>
        </authorList>
    </citation>
    <scope>STRUCTURE BY NMR OF 225-334</scope>
</reference>
<reference key="28">
    <citation type="journal article" date="2004" name="Nat. Struct. Mol. Biol.">
        <title>Structural analysis of cooperative RNA binding by the La motif and central RRM domain of human La protein.</title>
        <authorList>
            <person name="Alfano C."/>
            <person name="Sanfelice D."/>
            <person name="Babon J."/>
            <person name="Kelly G."/>
            <person name="Jacks A."/>
            <person name="Curry S."/>
            <person name="Conte M.R."/>
        </authorList>
    </citation>
    <scope>STRUCTURE BY NMR OF 1-202</scope>
</reference>
<reference key="29">
    <citation type="journal article" date="2006" name="Mol. Cell">
        <title>Structural basis for recognition and sequestration of UUU(OH) 3' termini of nascent RNA polymerase III transcripts by La, a rheumatic disease autoantigen.</title>
        <authorList>
            <person name="Teplova M."/>
            <person name="Yuan Y.R."/>
            <person name="Phan A.T."/>
            <person name="Malinina L."/>
            <person name="Ilin S."/>
            <person name="Teplov A."/>
            <person name="Patel D.J."/>
        </authorList>
    </citation>
    <scope>X-RAY CRYSTALLOGRAPHY (2.29 ANGSTROMS) OF 1-194</scope>
</reference>
<reference key="30">
    <citation type="journal article" date="2008" name="Structure">
        <title>Structural analysis reveals conformational plasticity in the recognition of RNA 3' ends by the human La protein.</title>
        <authorList>
            <person name="Kotik-Kogan O."/>
            <person name="Valentine E.R."/>
            <person name="Sanfelice D."/>
            <person name="Conte M.R."/>
            <person name="Curry S."/>
        </authorList>
    </citation>
    <scope>X-RAY CRYSTALLOGRAPHY (1.8 ANGSTROMS) OF 4-194</scope>
</reference>
<dbReference type="EMBL" id="X13697">
    <property type="protein sequence ID" value="CAA31985.1"/>
    <property type="molecule type" value="mRNA"/>
</dbReference>
<dbReference type="EMBL" id="J04205">
    <property type="protein sequence ID" value="AAA51885.1"/>
    <property type="molecule type" value="mRNA"/>
</dbReference>
<dbReference type="EMBL" id="BT009862">
    <property type="protein sequence ID" value="AAP88864.1"/>
    <property type="molecule type" value="mRNA"/>
</dbReference>
<dbReference type="EMBL" id="AB451228">
    <property type="protein sequence ID" value="BAG70042.1"/>
    <property type="molecule type" value="mRNA"/>
</dbReference>
<dbReference type="EMBL" id="AC009967">
    <property type="protein sequence ID" value="AAY14868.1"/>
    <property type="molecule type" value="Genomic_DNA"/>
</dbReference>
<dbReference type="EMBL" id="CH471058">
    <property type="protein sequence ID" value="EAX11258.1"/>
    <property type="molecule type" value="Genomic_DNA"/>
</dbReference>
<dbReference type="EMBL" id="CH471058">
    <property type="protein sequence ID" value="EAX11259.1"/>
    <property type="molecule type" value="Genomic_DNA"/>
</dbReference>
<dbReference type="EMBL" id="BC001289">
    <property type="protein sequence ID" value="AAH01289.1"/>
    <property type="molecule type" value="mRNA"/>
</dbReference>
<dbReference type="EMBL" id="BC020818">
    <property type="protein sequence ID" value="AAH20818.1"/>
    <property type="molecule type" value="mRNA"/>
</dbReference>
<dbReference type="EMBL" id="M20328">
    <property type="protein sequence ID" value="AAA36577.1"/>
    <property type="molecule type" value="mRNA"/>
</dbReference>
<dbReference type="CCDS" id="CCDS2237.1"/>
<dbReference type="PIR" id="A31888">
    <property type="entry name" value="A31888"/>
</dbReference>
<dbReference type="RefSeq" id="NP_001281074.1">
    <property type="nucleotide sequence ID" value="NM_001294145.2"/>
</dbReference>
<dbReference type="RefSeq" id="NP_003133.1">
    <property type="nucleotide sequence ID" value="NM_003142.5"/>
</dbReference>
<dbReference type="PDB" id="1OWX">
    <property type="method" value="NMR"/>
    <property type="chains" value="A=225-334"/>
</dbReference>
<dbReference type="PDB" id="1S79">
    <property type="method" value="NMR"/>
    <property type="chains" value="A=105-202"/>
</dbReference>
<dbReference type="PDB" id="1S7A">
    <property type="method" value="NMR"/>
    <property type="chains" value="A=1-103"/>
</dbReference>
<dbReference type="PDB" id="1YTY">
    <property type="method" value="X-ray"/>
    <property type="resolution" value="2.29 A"/>
    <property type="chains" value="A/B=1-194"/>
</dbReference>
<dbReference type="PDB" id="1ZH5">
    <property type="method" value="X-ray"/>
    <property type="resolution" value="1.85 A"/>
    <property type="chains" value="A/B=1-194"/>
</dbReference>
<dbReference type="PDB" id="2VOD">
    <property type="method" value="X-ray"/>
    <property type="resolution" value="2.10 A"/>
    <property type="chains" value="A/B=4-194"/>
</dbReference>
<dbReference type="PDB" id="2VON">
    <property type="method" value="X-ray"/>
    <property type="resolution" value="2.10 A"/>
    <property type="chains" value="A/B=4-194"/>
</dbReference>
<dbReference type="PDB" id="2VOO">
    <property type="method" value="X-ray"/>
    <property type="resolution" value="1.80 A"/>
    <property type="chains" value="A/B=4-194"/>
</dbReference>
<dbReference type="PDB" id="2VOP">
    <property type="method" value="X-ray"/>
    <property type="resolution" value="2.80 A"/>
    <property type="chains" value="A=4-194"/>
</dbReference>
<dbReference type="PDBsum" id="1OWX"/>
<dbReference type="PDBsum" id="1S79"/>
<dbReference type="PDBsum" id="1S7A"/>
<dbReference type="PDBsum" id="1YTY"/>
<dbReference type="PDBsum" id="1ZH5"/>
<dbReference type="PDBsum" id="2VOD"/>
<dbReference type="PDBsum" id="2VON"/>
<dbReference type="PDBsum" id="2VOO"/>
<dbReference type="PDBsum" id="2VOP"/>
<dbReference type="BMRB" id="P05455"/>
<dbReference type="SMR" id="P05455"/>
<dbReference type="BioGRID" id="112619">
    <property type="interactions" value="555"/>
</dbReference>
<dbReference type="CORUM" id="P05455"/>
<dbReference type="DIP" id="DIP-29750N"/>
<dbReference type="FunCoup" id="P05455">
    <property type="interactions" value="4071"/>
</dbReference>
<dbReference type="IntAct" id="P05455">
    <property type="interactions" value="264"/>
</dbReference>
<dbReference type="MINT" id="P05455"/>
<dbReference type="STRING" id="9606.ENSP00000386636"/>
<dbReference type="ChEMBL" id="CHEMBL2040701"/>
<dbReference type="GlyGen" id="P05455">
    <property type="glycosylation" value="1 site, 1 O-linked glycan (1 site)"/>
</dbReference>
<dbReference type="iPTMnet" id="P05455"/>
<dbReference type="MetOSite" id="P05455"/>
<dbReference type="PhosphoSitePlus" id="P05455"/>
<dbReference type="SwissPalm" id="P05455"/>
<dbReference type="BioMuta" id="SSB"/>
<dbReference type="DMDM" id="125985"/>
<dbReference type="jPOST" id="P05455"/>
<dbReference type="MassIVE" id="P05455"/>
<dbReference type="PaxDb" id="9606-ENSP00000386636"/>
<dbReference type="PeptideAtlas" id="P05455"/>
<dbReference type="ProteomicsDB" id="51841"/>
<dbReference type="Pumba" id="P05455"/>
<dbReference type="Antibodypedia" id="2797">
    <property type="antibodies" value="589 antibodies from 38 providers"/>
</dbReference>
<dbReference type="DNASU" id="6741"/>
<dbReference type="Ensembl" id="ENST00000260956.9">
    <property type="protein sequence ID" value="ENSP00000260956.4"/>
    <property type="gene ID" value="ENSG00000138385.16"/>
</dbReference>
<dbReference type="Ensembl" id="ENST00000409333.1">
    <property type="protein sequence ID" value="ENSP00000386636.1"/>
    <property type="gene ID" value="ENSG00000138385.16"/>
</dbReference>
<dbReference type="GeneID" id="6741"/>
<dbReference type="KEGG" id="hsa:6741"/>
<dbReference type="MANE-Select" id="ENST00000260956.9">
    <property type="protein sequence ID" value="ENSP00000260956.4"/>
    <property type="RefSeq nucleotide sequence ID" value="NM_003142.5"/>
    <property type="RefSeq protein sequence ID" value="NP_003133.1"/>
</dbReference>
<dbReference type="UCSC" id="uc002ufk.4">
    <property type="organism name" value="human"/>
</dbReference>
<dbReference type="AGR" id="HGNC:11316"/>
<dbReference type="CTD" id="6741"/>
<dbReference type="DisGeNET" id="6741"/>
<dbReference type="GeneCards" id="SSB"/>
<dbReference type="HGNC" id="HGNC:11316">
    <property type="gene designation" value="SSB"/>
</dbReference>
<dbReference type="HPA" id="ENSG00000138385">
    <property type="expression patterns" value="Low tissue specificity"/>
</dbReference>
<dbReference type="MIM" id="109090">
    <property type="type" value="gene"/>
</dbReference>
<dbReference type="neXtProt" id="NX_P05455"/>
<dbReference type="OpenTargets" id="ENSG00000138385"/>
<dbReference type="PharmGKB" id="PA36140"/>
<dbReference type="VEuPathDB" id="HostDB:ENSG00000138385"/>
<dbReference type="eggNOG" id="KOG4213">
    <property type="taxonomic scope" value="Eukaryota"/>
</dbReference>
<dbReference type="GeneTree" id="ENSGT00830000128380"/>
<dbReference type="HOGENOM" id="CLU_042341_0_0_1"/>
<dbReference type="InParanoid" id="P05455"/>
<dbReference type="OMA" id="QFERSIY"/>
<dbReference type="OrthoDB" id="439993at2759"/>
<dbReference type="PAN-GO" id="P05455">
    <property type="GO annotations" value="3 GO annotations based on evolutionary models"/>
</dbReference>
<dbReference type="PhylomeDB" id="P05455"/>
<dbReference type="TreeFam" id="TF314476"/>
<dbReference type="PathwayCommons" id="P05455"/>
<dbReference type="Reactome" id="R-HSA-73980">
    <property type="pathway name" value="RNA Polymerase III Transcription Termination"/>
</dbReference>
<dbReference type="Reactome" id="R-HSA-749476">
    <property type="pathway name" value="RNA Polymerase III Abortive And Retractive Initiation"/>
</dbReference>
<dbReference type="SignaLink" id="P05455"/>
<dbReference type="SIGNOR" id="P05455"/>
<dbReference type="BioGRID-ORCS" id="6741">
    <property type="hits" value="475 hits in 1168 CRISPR screens"/>
</dbReference>
<dbReference type="CD-CODE" id="91857CE7">
    <property type="entry name" value="Nucleolus"/>
</dbReference>
<dbReference type="ChiTaRS" id="SSB">
    <property type="organism name" value="human"/>
</dbReference>
<dbReference type="EvolutionaryTrace" id="P05455"/>
<dbReference type="GeneWiki" id="Sjogren_syndrome_antigen_B"/>
<dbReference type="GenomeRNAi" id="6741"/>
<dbReference type="Pharos" id="P05455">
    <property type="development level" value="Tbio"/>
</dbReference>
<dbReference type="PRO" id="PR:P05455"/>
<dbReference type="Proteomes" id="UP000005640">
    <property type="component" value="Chromosome 2"/>
</dbReference>
<dbReference type="RNAct" id="P05455">
    <property type="molecule type" value="protein"/>
</dbReference>
<dbReference type="Bgee" id="ENSG00000138385">
    <property type="expression patterns" value="Expressed in tendon of biceps brachii and 206 other cell types or tissues"/>
</dbReference>
<dbReference type="ExpressionAtlas" id="P05455">
    <property type="expression patterns" value="baseline and differential"/>
</dbReference>
<dbReference type="GO" id="GO:0000781">
    <property type="term" value="C:chromosome, telomeric region"/>
    <property type="evidence" value="ECO:0007005"/>
    <property type="project" value="BHF-UCL"/>
</dbReference>
<dbReference type="GO" id="GO:0005737">
    <property type="term" value="C:cytoplasm"/>
    <property type="evidence" value="ECO:0000314"/>
    <property type="project" value="CAFA"/>
</dbReference>
<dbReference type="GO" id="GO:0010494">
    <property type="term" value="C:cytoplasmic stress granule"/>
    <property type="evidence" value="ECO:0000318"/>
    <property type="project" value="GO_Central"/>
</dbReference>
<dbReference type="GO" id="GO:0005829">
    <property type="term" value="C:cytosol"/>
    <property type="evidence" value="ECO:0000318"/>
    <property type="project" value="GO_Central"/>
</dbReference>
<dbReference type="GO" id="GO:0005634">
    <property type="term" value="C:nucleus"/>
    <property type="evidence" value="ECO:0000314"/>
    <property type="project" value="CAFA"/>
</dbReference>
<dbReference type="GO" id="GO:1990904">
    <property type="term" value="C:ribonucleoprotein complex"/>
    <property type="evidence" value="ECO:0000304"/>
    <property type="project" value="ProtInc"/>
</dbReference>
<dbReference type="GO" id="GO:0003729">
    <property type="term" value="F:mRNA binding"/>
    <property type="evidence" value="ECO:0000318"/>
    <property type="project" value="GO_Central"/>
</dbReference>
<dbReference type="GO" id="GO:0008266">
    <property type="term" value="F:poly(U) RNA binding"/>
    <property type="evidence" value="ECO:0000315"/>
    <property type="project" value="CAFA"/>
</dbReference>
<dbReference type="GO" id="GO:0003723">
    <property type="term" value="F:RNA binding"/>
    <property type="evidence" value="ECO:0000315"/>
    <property type="project" value="CAFA"/>
</dbReference>
<dbReference type="GO" id="GO:1990825">
    <property type="term" value="F:sequence-specific mRNA binding"/>
    <property type="evidence" value="ECO:0000315"/>
    <property type="project" value="CAFA"/>
</dbReference>
<dbReference type="GO" id="GO:0000049">
    <property type="term" value="F:tRNA binding"/>
    <property type="evidence" value="ECO:0000315"/>
    <property type="project" value="CAFA"/>
</dbReference>
<dbReference type="GO" id="GO:0008334">
    <property type="term" value="P:histone mRNA metabolic process"/>
    <property type="evidence" value="ECO:0000304"/>
    <property type="project" value="ProtInc"/>
</dbReference>
<dbReference type="GO" id="GO:0075522">
    <property type="term" value="P:IRES-dependent viral translational initiation"/>
    <property type="evidence" value="ECO:0000314"/>
    <property type="project" value="UniProtKB"/>
</dbReference>
<dbReference type="GO" id="GO:0071045">
    <property type="term" value="P:nuclear histone mRNA catabolic process"/>
    <property type="evidence" value="ECO:0000315"/>
    <property type="project" value="CAFA"/>
</dbReference>
<dbReference type="GO" id="GO:0045727">
    <property type="term" value="P:positive regulation of translation"/>
    <property type="evidence" value="ECO:0000318"/>
    <property type="project" value="GO_Central"/>
</dbReference>
<dbReference type="GO" id="GO:1903608">
    <property type="term" value="P:protein localization to cytoplasmic stress granule"/>
    <property type="evidence" value="ECO:0000314"/>
    <property type="project" value="AgBase"/>
</dbReference>
<dbReference type="GO" id="GO:0042780">
    <property type="term" value="P:tRNA 3'-end processing"/>
    <property type="evidence" value="ECO:0000316"/>
    <property type="project" value="CAFA"/>
</dbReference>
<dbReference type="GO" id="GO:0001682">
    <property type="term" value="P:tRNA 5'-leader removal"/>
    <property type="evidence" value="ECO:0000316"/>
    <property type="project" value="CAFA"/>
</dbReference>
<dbReference type="GO" id="GO:0006409">
    <property type="term" value="P:tRNA export from nucleus"/>
    <property type="evidence" value="ECO:0000315"/>
    <property type="project" value="CAFA"/>
</dbReference>
<dbReference type="GO" id="GO:0006400">
    <property type="term" value="P:tRNA modification"/>
    <property type="evidence" value="ECO:0000304"/>
    <property type="project" value="ProtInc"/>
</dbReference>
<dbReference type="GO" id="GO:0008033">
    <property type="term" value="P:tRNA processing"/>
    <property type="evidence" value="ECO:0000315"/>
    <property type="project" value="CAFA"/>
</dbReference>
<dbReference type="CDD" id="cd08028">
    <property type="entry name" value="LARP_3"/>
    <property type="match status" value="1"/>
</dbReference>
<dbReference type="CDD" id="cd12291">
    <property type="entry name" value="RRM1_La"/>
    <property type="match status" value="1"/>
</dbReference>
<dbReference type="CDD" id="cd12541">
    <property type="entry name" value="RRM2_La"/>
    <property type="match status" value="1"/>
</dbReference>
<dbReference type="DisProt" id="DP00229"/>
<dbReference type="FunFam" id="3.30.70.330:FF:000366">
    <property type="entry name" value="Lupus La protein homolog"/>
    <property type="match status" value="1"/>
</dbReference>
<dbReference type="FunFam" id="3.30.70.330:FF:000402">
    <property type="entry name" value="Lupus La protein homolog"/>
    <property type="match status" value="1"/>
</dbReference>
<dbReference type="FunFam" id="1.10.10.10:FF:000336">
    <property type="entry name" value="lupus La protein homolog"/>
    <property type="match status" value="1"/>
</dbReference>
<dbReference type="Gene3D" id="3.30.70.330">
    <property type="match status" value="2"/>
</dbReference>
<dbReference type="Gene3D" id="1.10.10.10">
    <property type="entry name" value="Winged helix-like DNA-binding domain superfamily/Winged helix DNA-binding domain"/>
    <property type="match status" value="1"/>
</dbReference>
<dbReference type="InterPro" id="IPR045180">
    <property type="entry name" value="La_dom_prot"/>
</dbReference>
<dbReference type="InterPro" id="IPR006630">
    <property type="entry name" value="La_HTH"/>
</dbReference>
<dbReference type="InterPro" id="IPR014886">
    <property type="entry name" value="La_xRRM"/>
</dbReference>
<dbReference type="InterPro" id="IPR002344">
    <property type="entry name" value="Lupus_La"/>
</dbReference>
<dbReference type="InterPro" id="IPR012677">
    <property type="entry name" value="Nucleotide-bd_a/b_plait_sf"/>
</dbReference>
<dbReference type="InterPro" id="IPR035979">
    <property type="entry name" value="RBD_domain_sf"/>
</dbReference>
<dbReference type="InterPro" id="IPR000504">
    <property type="entry name" value="RRM_dom"/>
</dbReference>
<dbReference type="InterPro" id="IPR036388">
    <property type="entry name" value="WH-like_DNA-bd_sf"/>
</dbReference>
<dbReference type="InterPro" id="IPR036390">
    <property type="entry name" value="WH_DNA-bd_sf"/>
</dbReference>
<dbReference type="PANTHER" id="PTHR22792:SF158">
    <property type="entry name" value="LUPUS LA PROTEIN"/>
    <property type="match status" value="1"/>
</dbReference>
<dbReference type="PANTHER" id="PTHR22792">
    <property type="entry name" value="LUPUS LA PROTEIN-RELATED"/>
    <property type="match status" value="1"/>
</dbReference>
<dbReference type="Pfam" id="PF05383">
    <property type="entry name" value="La"/>
    <property type="match status" value="1"/>
</dbReference>
<dbReference type="Pfam" id="PF00076">
    <property type="entry name" value="RRM_1"/>
    <property type="match status" value="1"/>
</dbReference>
<dbReference type="Pfam" id="PF08777">
    <property type="entry name" value="RRM_3"/>
    <property type="match status" value="1"/>
</dbReference>
<dbReference type="PRINTS" id="PR00302">
    <property type="entry name" value="LUPUSLA"/>
</dbReference>
<dbReference type="SMART" id="SM00715">
    <property type="entry name" value="LA"/>
    <property type="match status" value="1"/>
</dbReference>
<dbReference type="SMART" id="SM00360">
    <property type="entry name" value="RRM"/>
    <property type="match status" value="1"/>
</dbReference>
<dbReference type="SUPFAM" id="SSF54928">
    <property type="entry name" value="RNA-binding domain, RBD"/>
    <property type="match status" value="2"/>
</dbReference>
<dbReference type="SUPFAM" id="SSF46785">
    <property type="entry name" value="Winged helix' DNA-binding domain"/>
    <property type="match status" value="1"/>
</dbReference>
<dbReference type="PROSITE" id="PS50961">
    <property type="entry name" value="HTH_LA"/>
    <property type="match status" value="1"/>
</dbReference>
<dbReference type="PROSITE" id="PS50102">
    <property type="entry name" value="RRM"/>
    <property type="match status" value="1"/>
</dbReference>
<dbReference type="PROSITE" id="PS51939">
    <property type="entry name" value="XRRM"/>
    <property type="match status" value="1"/>
</dbReference>
<protein>
    <recommendedName>
        <fullName>Lupus La protein</fullName>
    </recommendedName>
    <alternativeName>
        <fullName>La autoantigen</fullName>
    </alternativeName>
    <alternativeName>
        <fullName>La ribonucleoprotein</fullName>
    </alternativeName>
    <alternativeName>
        <fullName>Sjoegren syndrome type B antigen</fullName>
        <shortName>SS-B</shortName>
    </alternativeName>
</protein>
<feature type="chain" id="PRO_0000207599" description="Lupus La protein">
    <location>
        <begin position="1"/>
        <end position="408"/>
    </location>
</feature>
<feature type="domain" description="HTH La-type RNA-binding" evidence="3">
    <location>
        <begin position="7"/>
        <end position="99"/>
    </location>
</feature>
<feature type="domain" description="RRM" evidence="2">
    <location>
        <begin position="111"/>
        <end position="187"/>
    </location>
</feature>
<feature type="domain" description="xRRM" evidence="4">
    <location>
        <begin position="227"/>
        <end position="348"/>
    </location>
</feature>
<feature type="region of interest" description="Disordered" evidence="5">
    <location>
        <begin position="329"/>
        <end position="408"/>
    </location>
</feature>
<feature type="compositionally biased region" description="Basic residues" evidence="5">
    <location>
        <begin position="329"/>
        <end position="342"/>
    </location>
</feature>
<feature type="compositionally biased region" description="Basic and acidic residues" evidence="5">
    <location>
        <begin position="384"/>
        <end position="395"/>
    </location>
</feature>
<feature type="modified residue" description="Phosphoserine" evidence="21">
    <location>
        <position position="92"/>
    </location>
</feature>
<feature type="modified residue" description="Phosphoserine" evidence="21">
    <location>
        <position position="94"/>
    </location>
</feature>
<feature type="modified residue" description="N6-acetyllysine" evidence="17">
    <location>
        <position position="116"/>
    </location>
</feature>
<feature type="modified residue" description="Phosphothreonine" evidence="21">
    <location>
        <position position="120"/>
    </location>
</feature>
<feature type="modified residue" description="N6-acetyllysine" evidence="17">
    <location>
        <position position="128"/>
    </location>
</feature>
<feature type="modified residue" description="Phosphoserine" evidence="21">
    <location>
        <position position="225"/>
    </location>
</feature>
<feature type="modified residue" description="N6-acetyllysine" evidence="17">
    <location>
        <position position="328"/>
    </location>
</feature>
<feature type="modified residue" description="N6-acetyllysine" evidence="1">
    <location>
        <position position="341"/>
    </location>
</feature>
<feature type="modified residue" description="N6-acetyllysine" evidence="17">
    <location>
        <position position="360"/>
    </location>
</feature>
<feature type="modified residue" description="Phosphothreonine" evidence="22">
    <location>
        <position position="362"/>
    </location>
</feature>
<feature type="modified residue" description="Phosphoserine; by CK2" evidence="11 13 14 15 16 18 19 20 21">
    <location>
        <position position="366"/>
    </location>
</feature>
<feature type="sequence conflict" description="In Ref. 8; AAA36577." evidence="12" ref="8">
    <original>K</original>
    <variation>E</variation>
    <location>
        <position position="54"/>
    </location>
</feature>
<feature type="helix" evidence="27">
    <location>
        <begin position="11"/>
        <end position="24"/>
    </location>
</feature>
<feature type="turn" evidence="27">
    <location>
        <begin position="27"/>
        <end position="29"/>
    </location>
</feature>
<feature type="helix" evidence="27">
    <location>
        <begin position="30"/>
        <end position="32"/>
    </location>
</feature>
<feature type="helix" evidence="27">
    <location>
        <begin position="34"/>
        <end position="42"/>
    </location>
</feature>
<feature type="turn" evidence="27">
    <location>
        <begin position="43"/>
        <end position="45"/>
    </location>
</feature>
<feature type="strand" evidence="26">
    <location>
        <begin position="46"/>
        <end position="48"/>
    </location>
</feature>
<feature type="helix" evidence="27">
    <location>
        <begin position="49"/>
        <end position="52"/>
    </location>
</feature>
<feature type="helix" evidence="27">
    <location>
        <begin position="56"/>
        <end position="61"/>
    </location>
</feature>
<feature type="helix" evidence="27">
    <location>
        <begin position="65"/>
        <end position="73"/>
    </location>
</feature>
<feature type="strand" evidence="27">
    <location>
        <begin position="80"/>
        <end position="82"/>
    </location>
</feature>
<feature type="strand" evidence="27">
    <location>
        <begin position="86"/>
        <end position="91"/>
    </location>
</feature>
<feature type="helix" evidence="27">
    <location>
        <begin position="102"/>
        <end position="110"/>
    </location>
</feature>
<feature type="strand" evidence="27">
    <location>
        <begin position="112"/>
        <end position="116"/>
    </location>
</feature>
<feature type="helix" evidence="27">
    <location>
        <begin position="124"/>
        <end position="131"/>
    </location>
</feature>
<feature type="helix" evidence="24">
    <location>
        <begin position="132"/>
        <end position="134"/>
    </location>
</feature>
<feature type="strand" evidence="27">
    <location>
        <begin position="137"/>
        <end position="144"/>
    </location>
</feature>
<feature type="strand" evidence="28">
    <location>
        <begin position="146"/>
        <end position="148"/>
    </location>
</feature>
<feature type="strand" evidence="27">
    <location>
        <begin position="150"/>
        <end position="160"/>
    </location>
</feature>
<feature type="helix" evidence="27">
    <location>
        <begin position="161"/>
        <end position="169"/>
    </location>
</feature>
<feature type="strand" evidence="25">
    <location>
        <begin position="174"/>
        <end position="177"/>
    </location>
</feature>
<feature type="strand" evidence="27">
    <location>
        <begin position="181"/>
        <end position="184"/>
    </location>
</feature>
<feature type="turn" evidence="27">
    <location>
        <begin position="185"/>
        <end position="187"/>
    </location>
</feature>
<feature type="strand" evidence="23">
    <location>
        <begin position="233"/>
        <end position="239"/>
    </location>
</feature>
<feature type="helix" evidence="23">
    <location>
        <begin position="246"/>
        <end position="252"/>
    </location>
</feature>
<feature type="strand" evidence="23">
    <location>
        <begin position="259"/>
        <end position="263"/>
    </location>
</feature>
<feature type="strand" evidence="23">
    <location>
        <begin position="269"/>
        <end position="277"/>
    </location>
</feature>
<feature type="helix" evidence="23">
    <location>
        <begin position="279"/>
        <end position="288"/>
    </location>
</feature>
<feature type="turn" evidence="23">
    <location>
        <begin position="289"/>
        <end position="291"/>
    </location>
</feature>
<feature type="strand" evidence="23">
    <location>
        <begin position="298"/>
        <end position="304"/>
    </location>
</feature>
<feature type="helix" evidence="23">
    <location>
        <begin position="308"/>
        <end position="326"/>
    </location>
</feature>
<comment type="function">
    <text evidence="6 9 10">Binds to the 3' poly(U) terminus of nascent RNA polymerase III transcripts, protecting them from exonuclease digestion and facilitating their folding and maturation (PubMed:2470590, PubMed:3192525). In case of Coxsackievirus B3 infection, binds to the viral internal ribosome entry site (IRES) and stimulates the IRES-mediated translation (PubMed:12384597).</text>
</comment>
<comment type="subunit">
    <text evidence="7 8">Interacts with DDX15. May interact with RUFY1.</text>
</comment>
<comment type="interaction">
    <interactant intactId="EBI-358037">
        <id>P05455</id>
    </interactant>
    <interactant intactId="EBI-356991">
        <id>P54652</id>
        <label>HSPA2</label>
    </interactant>
    <organismsDiffer>false</organismsDiffer>
    <experiments>3</experiments>
</comment>
<comment type="interaction">
    <interactant intactId="EBI-358037">
        <id>P05455</id>
    </interactant>
    <interactant intactId="EBI-466029">
        <id>P42858</id>
        <label>HTT</label>
    </interactant>
    <organismsDiffer>false</organismsDiffer>
    <experiments>3</experiments>
</comment>
<comment type="interaction">
    <interactant intactId="EBI-358037">
        <id>P05455</id>
    </interactant>
    <interactant intactId="EBI-1246371">
        <id>O96000</id>
        <label>NDUFB10</label>
    </interactant>
    <organismsDiffer>false</organismsDiffer>
    <experiments>3</experiments>
</comment>
<comment type="interaction">
    <interactant intactId="EBI-358037">
        <id>P05455</id>
    </interactant>
    <interactant intactId="EBI-948476">
        <id>Q8WZA2</id>
        <label>RAPGEF4</label>
    </interactant>
    <organismsDiffer>false</organismsDiffer>
    <experiments>3</experiments>
</comment>
<comment type="interaction">
    <interactant intactId="EBI-358037">
        <id>P05455</id>
    </interactant>
    <interactant intactId="EBI-6858501">
        <id>PRO_0000045599</id>
        <dbReference type="UniProtKB" id="Q99IB8"/>
    </interactant>
    <organismsDiffer>true</organismsDiffer>
    <experiments>2</experiments>
</comment>
<comment type="interaction">
    <interactant intactId="EBI-358037">
        <id>P05455</id>
    </interactant>
    <interactant intactId="EBI-6927928">
        <id>PRO_0000045603</id>
        <dbReference type="UniProtKB" id="Q99IB8"/>
    </interactant>
    <organismsDiffer>true</organismsDiffer>
    <experiments>2</experiments>
</comment>
<comment type="subcellular location">
    <subcellularLocation>
        <location evidence="12">Nucleus</location>
    </subcellularLocation>
</comment>
<comment type="PTM">
    <text evidence="11">Phosphorylated. The phosphorylation sites are at the C-terminal part of the protein.</text>
</comment>
<comment type="PTM">
    <text>The N-terminus is blocked.</text>
</comment>
<comment type="miscellaneous">
    <text>Sera from patients with systemic lupus erythematosus (SLE) often contain antibodies that react with the normal cellular La protein as if this antigen was foreign.</text>
</comment>
<keyword id="KW-0002">3D-structure</keyword>
<keyword id="KW-0007">Acetylation</keyword>
<keyword id="KW-0539">Nucleus</keyword>
<keyword id="KW-0597">Phosphoprotein</keyword>
<keyword id="KW-1267">Proteomics identification</keyword>
<keyword id="KW-1185">Reference proteome</keyword>
<keyword id="KW-0694">RNA-binding</keyword>
<keyword id="KW-0772">Systemic lupus erythematosus</keyword>
<gene>
    <name type="primary">SSB</name>
</gene>
<sequence length="408" mass="46837">MAENGDNEKMAALEAKICHQIEYYFGDFNLPRDKFLKEQIKLDEGWVPLEIMIKFNRLNRLTTDFNVIVEALSKSKAELMEISEDKTKIRRSPSKPLPEVTDEYKNDVKNRSVYIKGFPTDATLDDIKEWLEDKGQVLNIQMRRTLHKAFKGSIFVVFDSIESAKKFVETPGQKYKETDLLILFKDDYFAKKNEERKQNKVEAKLRAKQEQEAKQKLEEDAEMKSLEEKIGCLLKFSGDLDDQTCREDLHILFSNHGEIKWIDFVRGAKEGIILFKEKAKEALGKAKDANNGNLQLRNKEVTWEVLEGEVEKEALKKIIEDQQESLNKWKSKGRRFKGKGKGNKAAQPGSGKGKVQFQGKKTKFASDDEHDEHDENGATGPVKRAREETDKEEPASKQQKTENGAGDQ</sequence>
<organism>
    <name type="scientific">Homo sapiens</name>
    <name type="common">Human</name>
    <dbReference type="NCBI Taxonomy" id="9606"/>
    <lineage>
        <taxon>Eukaryota</taxon>
        <taxon>Metazoa</taxon>
        <taxon>Chordata</taxon>
        <taxon>Craniata</taxon>
        <taxon>Vertebrata</taxon>
        <taxon>Euteleostomi</taxon>
        <taxon>Mammalia</taxon>
        <taxon>Eutheria</taxon>
        <taxon>Euarchontoglires</taxon>
        <taxon>Primates</taxon>
        <taxon>Haplorrhini</taxon>
        <taxon>Catarrhini</taxon>
        <taxon>Hominidae</taxon>
        <taxon>Homo</taxon>
    </lineage>
</organism>
<proteinExistence type="evidence at protein level"/>